<keyword id="KW-0162">Chylomicron</keyword>
<keyword id="KW-0175">Coiled coil</keyword>
<keyword id="KW-0967">Endosome</keyword>
<keyword id="KW-0333">Golgi apparatus</keyword>
<keyword id="KW-0345">HDL</keyword>
<keyword id="KW-0445">Lipid transport</keyword>
<keyword id="KW-0597">Phosphoprotein</keyword>
<keyword id="KW-0964">Secreted</keyword>
<keyword id="KW-0732">Signal</keyword>
<keyword id="KW-0813">Transport</keyword>
<keyword id="KW-0850">VLDL</keyword>
<gene>
    <name type="primary">APOA5</name>
</gene>
<reference key="1">
    <citation type="submission" date="2018-12" db="EMBL/GenBank/DDBJ databases">
        <title>The genome of the Harbour Seal (Phoca vitulina).</title>
        <authorList>
            <person name="Culibrk L."/>
            <person name="Leelakumari S."/>
            <person name="Taylor G.A."/>
            <person name="Tse K."/>
            <person name="Cheng D."/>
            <person name="Chuah E."/>
            <person name="Kirk H."/>
            <person name="Pandoh P."/>
            <person name="Troussard A."/>
            <person name="Zhao Y."/>
            <person name="Mungall A."/>
            <person name="Moore R."/>
            <person name="Akhurst L."/>
            <person name="Marra M.A."/>
            <person name="Haulena M."/>
            <person name="Jones S.J.M."/>
        </authorList>
    </citation>
    <scope>NUCLEOTIDE SEQUENCE [LARGE SCALE GENOMIC DNA]</scope>
    <source>
        <tissue>Blood</tissue>
    </source>
</reference>
<reference key="2">
    <citation type="unpublished observations" date="2019-10">
        <authorList>
            <person name="Puppione D.L."/>
        </authorList>
    </citation>
    <scope>IDENTIFICATION</scope>
</reference>
<organism>
    <name type="scientific">Phoca vitulina</name>
    <name type="common">Harbor seal</name>
    <dbReference type="NCBI Taxonomy" id="9720"/>
    <lineage>
        <taxon>Eukaryota</taxon>
        <taxon>Metazoa</taxon>
        <taxon>Chordata</taxon>
        <taxon>Craniata</taxon>
        <taxon>Vertebrata</taxon>
        <taxon>Euteleostomi</taxon>
        <taxon>Mammalia</taxon>
        <taxon>Eutheria</taxon>
        <taxon>Laurasiatheria</taxon>
        <taxon>Carnivora</taxon>
        <taxon>Caniformia</taxon>
        <taxon>Pinnipedia</taxon>
        <taxon>Phocidae</taxon>
        <taxon>Phocinae</taxon>
        <taxon>Phoca</taxon>
    </lineage>
</organism>
<accession>P0DTS3</accession>
<name>APOA5_PHOVI</name>
<sequence>MVAVLTWALALLSAFATAQTQKGFWDYFSQSSGDKSKVARVQQQKLTWETTSLKDSLEQDLSNMDKFLEKLGPLSGQGREPPGLAHDPEGMRQQLQDELAEVRARLEPYMAEAHQQVGWNLEGLRRQLKPYTVELMEQVARRVQELQEQLRVVGEGTKAQLLGGVDEARGLLQELQTRVVQHTGRVRELFHPYAQRLVTGIGRHVQELHRSVAPHAAASSARLSRCVQTLSRKLTLKAEALHARIQQNLDQLREELSAFAGAGAGGAEEGANPDPQMLSQEVRQRLQAFRHDTFLQIADFTRAIDQETEEVQLQLAPPPPGHSAFAPEFLQADSSEARSKLQARLEDLWEDINDSLHDGGLSHLEEP</sequence>
<feature type="signal peptide" evidence="3">
    <location>
        <begin position="1"/>
        <end position="20"/>
    </location>
</feature>
<feature type="chain" id="PRO_0000448770" description="Apolipoprotein A-V">
    <location>
        <begin position="21"/>
        <end position="367"/>
    </location>
</feature>
<feature type="modified residue" description="Phosphoserine" evidence="1">
    <location>
        <position position="56"/>
    </location>
</feature>
<dbReference type="EMBL" id="ML169427">
    <property type="status" value="NOT_ANNOTATED_CDS"/>
    <property type="molecule type" value="Genomic_DNA"/>
</dbReference>
<dbReference type="RefSeq" id="XP_032283975.1">
    <property type="nucleotide sequence ID" value="XM_032428084.1"/>
</dbReference>
<dbReference type="SMR" id="P0DTS3"/>
<dbReference type="GeneID" id="116646985"/>
<dbReference type="GO" id="GO:0042627">
    <property type="term" value="C:chylomicron"/>
    <property type="evidence" value="ECO:0007669"/>
    <property type="project" value="UniProtKB-KW"/>
</dbReference>
<dbReference type="GO" id="GO:0005769">
    <property type="term" value="C:early endosome"/>
    <property type="evidence" value="ECO:0007669"/>
    <property type="project" value="UniProtKB-SubCell"/>
</dbReference>
<dbReference type="GO" id="GO:1903561">
    <property type="term" value="C:extracellular vesicle"/>
    <property type="evidence" value="ECO:0007669"/>
    <property type="project" value="TreeGrafter"/>
</dbReference>
<dbReference type="GO" id="GO:0005794">
    <property type="term" value="C:Golgi apparatus"/>
    <property type="evidence" value="ECO:0007669"/>
    <property type="project" value="UniProtKB-SubCell"/>
</dbReference>
<dbReference type="GO" id="GO:0034364">
    <property type="term" value="C:high-density lipoprotein particle"/>
    <property type="evidence" value="ECO:0007669"/>
    <property type="project" value="UniProtKB-KW"/>
</dbReference>
<dbReference type="GO" id="GO:0005770">
    <property type="term" value="C:late endosome"/>
    <property type="evidence" value="ECO:0007669"/>
    <property type="project" value="UniProtKB-SubCell"/>
</dbReference>
<dbReference type="GO" id="GO:0034361">
    <property type="term" value="C:very-low-density lipoprotein particle"/>
    <property type="evidence" value="ECO:0007669"/>
    <property type="project" value="UniProtKB-KW"/>
</dbReference>
<dbReference type="GO" id="GO:0120020">
    <property type="term" value="F:cholesterol transfer activity"/>
    <property type="evidence" value="ECO:0007669"/>
    <property type="project" value="TreeGrafter"/>
</dbReference>
<dbReference type="GO" id="GO:0060228">
    <property type="term" value="F:phosphatidylcholine-sterol O-acyltransferase activator activity"/>
    <property type="evidence" value="ECO:0007669"/>
    <property type="project" value="TreeGrafter"/>
</dbReference>
<dbReference type="GO" id="GO:0005543">
    <property type="term" value="F:phospholipid binding"/>
    <property type="evidence" value="ECO:0007669"/>
    <property type="project" value="TreeGrafter"/>
</dbReference>
<dbReference type="GO" id="GO:0055090">
    <property type="term" value="P:acylglycerol homeostasis"/>
    <property type="evidence" value="ECO:0007669"/>
    <property type="project" value="TreeGrafter"/>
</dbReference>
<dbReference type="GO" id="GO:0033344">
    <property type="term" value="P:cholesterol efflux"/>
    <property type="evidence" value="ECO:0007669"/>
    <property type="project" value="TreeGrafter"/>
</dbReference>
<dbReference type="GO" id="GO:0008203">
    <property type="term" value="P:cholesterol metabolic process"/>
    <property type="evidence" value="ECO:0007669"/>
    <property type="project" value="TreeGrafter"/>
</dbReference>
<dbReference type="GO" id="GO:0042157">
    <property type="term" value="P:lipoprotein metabolic process"/>
    <property type="evidence" value="ECO:0007669"/>
    <property type="project" value="InterPro"/>
</dbReference>
<dbReference type="GO" id="GO:0033700">
    <property type="term" value="P:phospholipid efflux"/>
    <property type="evidence" value="ECO:0007669"/>
    <property type="project" value="TreeGrafter"/>
</dbReference>
<dbReference type="FunFam" id="1.20.120.20:FF:000006">
    <property type="entry name" value="Apolipoprotein A-V"/>
    <property type="match status" value="1"/>
</dbReference>
<dbReference type="FunFam" id="1.20.120.20:FF:000009">
    <property type="entry name" value="apolipoprotein A-V"/>
    <property type="match status" value="1"/>
</dbReference>
<dbReference type="Gene3D" id="1.20.120.20">
    <property type="entry name" value="Apolipoprotein"/>
    <property type="match status" value="2"/>
</dbReference>
<dbReference type="InterPro" id="IPR000074">
    <property type="entry name" value="ApoA_E"/>
</dbReference>
<dbReference type="InterPro" id="IPR050163">
    <property type="entry name" value="Apolipoprotein_A1/A4/E"/>
</dbReference>
<dbReference type="PANTHER" id="PTHR18976">
    <property type="entry name" value="APOLIPOPROTEIN"/>
    <property type="match status" value="1"/>
</dbReference>
<dbReference type="PANTHER" id="PTHR18976:SF13">
    <property type="entry name" value="APOLIPOPROTEIN A-V"/>
    <property type="match status" value="1"/>
</dbReference>
<dbReference type="Pfam" id="PF01442">
    <property type="entry name" value="Apolipoprotein"/>
    <property type="match status" value="1"/>
</dbReference>
<dbReference type="SUPFAM" id="SSF58113">
    <property type="entry name" value="Apolipoprotein A-I"/>
    <property type="match status" value="1"/>
</dbReference>
<protein>
    <recommendedName>
        <fullName>Apolipoprotein A-V</fullName>
        <shortName>Apo-AV</shortName>
        <shortName>ApoA-V</shortName>
    </recommendedName>
    <alternativeName>
        <fullName>Apolipoprotein A5</fullName>
    </alternativeName>
</protein>
<comment type="function">
    <text evidence="1 2">Minor apolipoprotein mainly associated with HDL and to a lesser extent with VLDL. May also be associated with chylomicrons (By similarity). Important determinant of plasma triglyceride (TG) levels by both being a potent stimulator of apo-CII lipoprotein lipase (LPL) TG hydrolysis and an inhibitor of the hepatic VLDL-TG production rate (without affecting the VLDL-apoB production rate) (By similarity). Activates poorly lecithin:cholesterol acyltransferase (LCAT) and does not enhance efflux of cholesterol from macrophages (By similarity). Binds heparin (By similarity).</text>
</comment>
<comment type="subunit">
    <text evidence="1">Interacts with GPIHBP1 (By similarity). Interacts with SORL1; this interaction leads to APOA5 internalization and sorting either to lysosomes and degradation, or to the trans-Golgi network (By similarity).</text>
</comment>
<comment type="subcellular location">
    <subcellularLocation>
        <location evidence="1">Secreted</location>
    </subcellularLocation>
    <subcellularLocation>
        <location evidence="1">Early endosome</location>
    </subcellularLocation>
    <subcellularLocation>
        <location evidence="1">Late endosome</location>
    </subcellularLocation>
    <subcellularLocation>
        <location evidence="1">Golgi apparatus</location>
        <location evidence="1">trans-Golgi network</location>
    </subcellularLocation>
    <text evidence="1">In the presence of SORL1, internalized to early endosomes, sorted in a retrograde fashion to late endosomes, from which a portion is sent to lysosomes and degradation, another portion is sorted to the trans-Golgi network.</text>
</comment>
<comment type="PTM">
    <text evidence="1">Phosphorylated by FAM20C in the extracellular medium.</text>
</comment>
<comment type="similarity">
    <text evidence="4">Belongs to the apolipoprotein A1/A4/E family.</text>
</comment>
<proteinExistence type="inferred from homology"/>
<evidence type="ECO:0000250" key="1">
    <source>
        <dbReference type="UniProtKB" id="Q6Q788"/>
    </source>
</evidence>
<evidence type="ECO:0000250" key="2">
    <source>
        <dbReference type="UniProtKB" id="Q8C7G5"/>
    </source>
</evidence>
<evidence type="ECO:0000255" key="3"/>
<evidence type="ECO:0000305" key="4"/>